<name>CRP4_LIMPO</name>
<evidence type="ECO:0000250" key="1"/>
<evidence type="ECO:0000255" key="2"/>
<evidence type="ECO:0000255" key="3">
    <source>
        <dbReference type="PROSITE-ProRule" id="PRU01172"/>
    </source>
</evidence>
<evidence type="ECO:0000269" key="4">
    <source>
    </source>
</evidence>
<evidence type="ECO:0000305" key="5"/>
<proteinExistence type="evidence at protein level"/>
<organism>
    <name type="scientific">Limulus polyphemus</name>
    <name type="common">Atlantic horseshoe crab</name>
    <dbReference type="NCBI Taxonomy" id="6850"/>
    <lineage>
        <taxon>Eukaryota</taxon>
        <taxon>Metazoa</taxon>
        <taxon>Ecdysozoa</taxon>
        <taxon>Arthropoda</taxon>
        <taxon>Chelicerata</taxon>
        <taxon>Merostomata</taxon>
        <taxon>Xiphosura</taxon>
        <taxon>Limulidae</taxon>
        <taxon>Limulus</taxon>
    </lineage>
</organism>
<feature type="signal peptide" evidence="4">
    <location>
        <begin position="1"/>
        <end position="24"/>
    </location>
</feature>
<feature type="chain" id="PRO_0000023535" description="C-reactive protein 1.4">
    <location>
        <begin position="25"/>
        <end position="242"/>
    </location>
</feature>
<feature type="domain" description="Pentraxin (PTX)" evidence="3">
    <location>
        <begin position="30"/>
        <end position="241"/>
    </location>
</feature>
<feature type="binding site" evidence="2">
    <location>
        <position position="60"/>
    </location>
    <ligand>
        <name>phosphocholine</name>
        <dbReference type="ChEBI" id="CHEBI:295975"/>
    </ligand>
</feature>
<feature type="binding site" evidence="2">
    <location>
        <position position="63"/>
    </location>
    <ligand>
        <name>phosphocholine</name>
        <dbReference type="ChEBI" id="CHEBI:295975"/>
    </ligand>
</feature>
<feature type="binding site" evidence="3">
    <location>
        <position position="85"/>
    </location>
    <ligand>
        <name>Ca(2+)</name>
        <dbReference type="ChEBI" id="CHEBI:29108"/>
        <label>1</label>
    </ligand>
</feature>
<feature type="binding site" evidence="3">
    <location>
        <position position="86"/>
    </location>
    <ligand>
        <name>Ca(2+)</name>
        <dbReference type="ChEBI" id="CHEBI:29108"/>
        <label>1</label>
    </ligand>
</feature>
<feature type="binding site" evidence="3">
    <location>
        <position position="168"/>
    </location>
    <ligand>
        <name>Ca(2+)</name>
        <dbReference type="ChEBI" id="CHEBI:29108"/>
        <label>1</label>
    </ligand>
</feature>
<feature type="binding site" evidence="3">
    <location>
        <position position="168"/>
    </location>
    <ligand>
        <name>Ca(2+)</name>
        <dbReference type="ChEBI" id="CHEBI:29108"/>
        <label>2</label>
    </ligand>
</feature>
<feature type="binding site" evidence="3">
    <location>
        <position position="169"/>
    </location>
    <ligand>
        <name>Ca(2+)</name>
        <dbReference type="ChEBI" id="CHEBI:29108"/>
        <label>1</label>
    </ligand>
</feature>
<feature type="binding site" evidence="3">
    <location>
        <position position="170"/>
    </location>
    <ligand>
        <name>Ca(2+)</name>
        <dbReference type="ChEBI" id="CHEBI:29108"/>
        <label>1</label>
    </ligand>
</feature>
<feature type="binding site" evidence="3">
    <location>
        <position position="170"/>
    </location>
    <ligand>
        <name>Ca(2+)</name>
        <dbReference type="ChEBI" id="CHEBI:29108"/>
        <label>2</label>
    </ligand>
</feature>
<feature type="binding site" evidence="3">
    <location>
        <position position="180"/>
    </location>
    <ligand>
        <name>Ca(2+)</name>
        <dbReference type="ChEBI" id="CHEBI:29108"/>
        <label>2</label>
    </ligand>
</feature>
<feature type="glycosylation site" description="N-linked (GlcNAc...) asparagine" evidence="4">
    <location>
        <position position="147"/>
    </location>
</feature>
<feature type="disulfide bond" evidence="3 4">
    <location>
        <begin position="62"/>
        <end position="125"/>
    </location>
</feature>
<feature type="disulfide bond" evidence="4">
    <location>
        <begin position="112"/>
        <end position="144"/>
    </location>
</feature>
<feature type="disulfide bond" evidence="4">
    <location>
        <begin position="207"/>
        <end position="241"/>
    </location>
</feature>
<comment type="function">
    <text>Might serve the role of immunoglobulins.</text>
</comment>
<comment type="cofactor">
    <cofactor evidence="1">
        <name>Ca(2+)</name>
        <dbReference type="ChEBI" id="CHEBI:29108"/>
    </cofactor>
    <text evidence="1">Binds 2 calcium ions per subunit.</text>
</comment>
<comment type="subunit">
    <text>Homopentamer. Pentraxin (or pentaxin) have a discoid arrangement of 5 non-covalently bound subunits.</text>
</comment>
<comment type="subcellular location">
    <subcellularLocation>
        <location>Secreted</location>
    </subcellularLocation>
</comment>
<comment type="similarity">
    <text evidence="5">Belongs to the pentraxin family.</text>
</comment>
<protein>
    <recommendedName>
        <fullName>C-reactive protein 1.4</fullName>
    </recommendedName>
</protein>
<accession>P06206</accession>
<dbReference type="EMBL" id="M14024">
    <property type="protein sequence ID" value="AAA28268.1"/>
    <property type="molecule type" value="Genomic_DNA"/>
</dbReference>
<dbReference type="PIR" id="A25192">
    <property type="entry name" value="A25192"/>
</dbReference>
<dbReference type="SMR" id="P06206"/>
<dbReference type="iPTMnet" id="P06206"/>
<dbReference type="OrthoDB" id="6515930at2759"/>
<dbReference type="Proteomes" id="UP000694941">
    <property type="component" value="Unplaced"/>
</dbReference>
<dbReference type="GO" id="GO:0005576">
    <property type="term" value="C:extracellular region"/>
    <property type="evidence" value="ECO:0007669"/>
    <property type="project" value="UniProtKB-SubCell"/>
</dbReference>
<dbReference type="GO" id="GO:0046872">
    <property type="term" value="F:metal ion binding"/>
    <property type="evidence" value="ECO:0007669"/>
    <property type="project" value="UniProtKB-KW"/>
</dbReference>
<dbReference type="Gene3D" id="2.60.120.200">
    <property type="match status" value="1"/>
</dbReference>
<dbReference type="InterPro" id="IPR013320">
    <property type="entry name" value="ConA-like_dom_sf"/>
</dbReference>
<dbReference type="InterPro" id="IPR051360">
    <property type="entry name" value="Neuronal_Pentraxin_Related"/>
</dbReference>
<dbReference type="InterPro" id="IPR030476">
    <property type="entry name" value="Pentaxin_CS"/>
</dbReference>
<dbReference type="InterPro" id="IPR001759">
    <property type="entry name" value="Pentraxin-related"/>
</dbReference>
<dbReference type="PANTHER" id="PTHR19277:SF161">
    <property type="entry name" value="LAMININ G DOMAIN-CONTAINING PROTEIN"/>
    <property type="match status" value="1"/>
</dbReference>
<dbReference type="PANTHER" id="PTHR19277">
    <property type="entry name" value="PENTRAXIN"/>
    <property type="match status" value="1"/>
</dbReference>
<dbReference type="Pfam" id="PF00354">
    <property type="entry name" value="Pentaxin"/>
    <property type="match status" value="1"/>
</dbReference>
<dbReference type="PRINTS" id="PR00895">
    <property type="entry name" value="PENTAXIN"/>
</dbReference>
<dbReference type="SMART" id="SM00159">
    <property type="entry name" value="PTX"/>
    <property type="match status" value="1"/>
</dbReference>
<dbReference type="SUPFAM" id="SSF49899">
    <property type="entry name" value="Concanavalin A-like lectins/glucanases"/>
    <property type="match status" value="1"/>
</dbReference>
<dbReference type="PROSITE" id="PS00289">
    <property type="entry name" value="PTX_1"/>
    <property type="match status" value="1"/>
</dbReference>
<dbReference type="PROSITE" id="PS51828">
    <property type="entry name" value="PTX_2"/>
    <property type="match status" value="1"/>
</dbReference>
<reference key="1">
    <citation type="journal article" date="1986" name="J. Biol. Chem.">
        <title>Isolation and characterization of Limulus C-reactive protein genes.</title>
        <authorList>
            <person name="Nguyen N.Y."/>
            <person name="Suzuki A."/>
            <person name="Cheng S.-M."/>
            <person name="Zon G."/>
            <person name="Liu T.-Y."/>
        </authorList>
    </citation>
    <scope>NUCLEOTIDE SEQUENCE [GENOMIC DNA]</scope>
</reference>
<reference key="2">
    <citation type="journal article" date="1986" name="J. Biol. Chem.">
        <title>The amino acid sequence of Limulus C-reactive protein. Evidence of polymorphism.</title>
        <authorList>
            <person name="Nguyen N.Y."/>
            <person name="Suzuki A."/>
            <person name="Boykins R.A."/>
            <person name="Liu T.-Y."/>
        </authorList>
    </citation>
    <scope>PROTEIN SEQUENCE OF 25-242</scope>
    <scope>DISULFIDE BONDS</scope>
    <scope>GLYCOSYLATION AT ASN-147</scope>
</reference>
<keyword id="KW-0106">Calcium</keyword>
<keyword id="KW-0903">Direct protein sequencing</keyword>
<keyword id="KW-1015">Disulfide bond</keyword>
<keyword id="KW-0325">Glycoprotein</keyword>
<keyword id="KW-0479">Metal-binding</keyword>
<keyword id="KW-0964">Secreted</keyword>
<keyword id="KW-0732">Signal</keyword>
<sequence>MKTFHGPTFGTAVFLYLLLFLTSALEEGEITSKVKFPPSSSPSFPRLVMVGTLPDLQEITLCYWFKVNHLKSTLTIFSYNTAKNDNELLTSLEKQGAFHMNVHGAPQLKVQCPNKIHIGKWHHVCHTWSSWEGEATIGVDGFHCKGNATGIAMGVTLSQGGLVVLGQEQDSVGGEYDAEQSLEGELSELNLWNTVLNHEQIKHLSKCAHPSERHIHGNIIQWDKTQFQAYDGVVLSPNEICA</sequence>